<organism>
    <name type="scientific">Komagataella phaffii (strain GS115 / ATCC 20864)</name>
    <name type="common">Yeast</name>
    <name type="synonym">Pichia pastoris</name>
    <dbReference type="NCBI Taxonomy" id="644223"/>
    <lineage>
        <taxon>Eukaryota</taxon>
        <taxon>Fungi</taxon>
        <taxon>Dikarya</taxon>
        <taxon>Ascomycota</taxon>
        <taxon>Saccharomycotina</taxon>
        <taxon>Pichiomycetes</taxon>
        <taxon>Pichiales</taxon>
        <taxon>Pichiaceae</taxon>
        <taxon>Komagataella</taxon>
    </lineage>
</organism>
<feature type="signal peptide" evidence="2">
    <location>
        <begin position="1"/>
        <end position="20"/>
    </location>
</feature>
<feature type="chain" id="PRO_0000407532" description="Vacuolar protein sorting/targeting protein 10">
    <location>
        <begin position="21"/>
        <end position="1542"/>
    </location>
</feature>
<feature type="topological domain" description="Lumenal" evidence="2">
    <location>
        <begin position="21"/>
        <end position="1387"/>
    </location>
</feature>
<feature type="transmembrane region" description="Helical" evidence="2">
    <location>
        <begin position="1388"/>
        <end position="1408"/>
    </location>
</feature>
<feature type="topological domain" description="Cytoplasmic" evidence="2">
    <location>
        <begin position="1409"/>
        <end position="1445"/>
    </location>
</feature>
<feature type="transmembrane region" description="Helical" evidence="2">
    <location>
        <begin position="1446"/>
        <end position="1466"/>
    </location>
</feature>
<feature type="topological domain" description="Lumenal" evidence="2">
    <location>
        <begin position="1467"/>
        <end position="1542"/>
    </location>
</feature>
<feature type="repeat" description="BNR 1">
    <location>
        <begin position="56"/>
        <end position="65"/>
    </location>
</feature>
<feature type="repeat" description="BNR 2">
    <location>
        <begin position="102"/>
        <end position="112"/>
    </location>
</feature>
<feature type="repeat" description="BNR 3">
    <location>
        <begin position="373"/>
        <end position="383"/>
    </location>
</feature>
<feature type="repeat" description="BNR 4">
    <location>
        <begin position="439"/>
        <end position="449"/>
    </location>
</feature>
<feature type="repeat" description="BNR 5">
    <location>
        <begin position="484"/>
        <end position="494"/>
    </location>
</feature>
<feature type="repeat" description="BNR 6">
    <location>
        <begin position="732"/>
        <end position="742"/>
    </location>
</feature>
<feature type="repeat" description="BNR 7">
    <location>
        <begin position="1128"/>
        <end position="1138"/>
    </location>
</feature>
<feature type="repeat" description="BNR 8">
    <location>
        <begin position="1170"/>
        <end position="1178"/>
    </location>
</feature>
<feature type="glycosylation site" description="N-linked (GlcNAc...) asparagine" evidence="2">
    <location>
        <position position="41"/>
    </location>
</feature>
<feature type="glycosylation site" description="N-linked (GlcNAc...) asparagine" evidence="2">
    <location>
        <position position="454"/>
    </location>
</feature>
<feature type="glycosylation site" description="N-linked (GlcNAc...) asparagine" evidence="2">
    <location>
        <position position="633"/>
    </location>
</feature>
<feature type="glycosylation site" description="N-linked (GlcNAc...) asparagine" evidence="2">
    <location>
        <position position="714"/>
    </location>
</feature>
<feature type="glycosylation site" description="N-linked (GlcNAc...) asparagine" evidence="2">
    <location>
        <position position="922"/>
    </location>
</feature>
<feature type="glycosylation site" description="N-linked (GlcNAc...) asparagine" evidence="2">
    <location>
        <position position="989"/>
    </location>
</feature>
<reference key="1">
    <citation type="journal article" date="2009" name="Nat. Biotechnol.">
        <title>Genome sequence of the recombinant protein production host Pichia pastoris.</title>
        <authorList>
            <person name="De Schutter K."/>
            <person name="Lin Y.-C."/>
            <person name="Tiels P."/>
            <person name="Van Hecke A."/>
            <person name="Glinka S."/>
            <person name="Weber-Lehmann J."/>
            <person name="Rouze P."/>
            <person name="Van de Peer Y."/>
            <person name="Callewaert N."/>
        </authorList>
    </citation>
    <scope>NUCLEOTIDE SEQUENCE [LARGE SCALE GENOMIC DNA]</scope>
    <source>
        <strain>GS115 / ATCC 20864</strain>
    </source>
</reference>
<sequence>MWIERNLIASILLFSTSAYAAFKPRIVKKEFDDLLNPIYFNDSSTVLGLVDQTLLISNDDGKSWTNLQEVITPGEIDPLTIVNIEFNPSASKAFVFTASKHYLTLDKGSTWKEFQIPLEKYGNRIAYDVEFNFVNEEHAIIRTRSCKRRFDCKDEYFYSLDDLQSVDKITISDEIVNCQFSQSSTSSDSRKNDAITCVTRKLDSNRHFLESNVLTTLNFFKDVTSLPASDPLTKMLIKDIRVVQNYIVLFVSSDRYNKYSPTLLFISKDGNTFKEASLPDSEGTSPSVHFLKSPNPNLIRAIRLGKKNSLDGGGFYSEVLQSDSTGLHFHVLLDHLEANLLSYYQIENLANLEGIWIANQIDTSSKFGSKSVITFDAGLTWSPVTVDEDEDKSLHIIAFAGENSLYESKFPVSTPGIALRIGLIGDSSDALDIGSYRTFLTRDAGLTWSQVFDNVSVCGFGNYGNIILCCSYDPLLRSEPLKFRYSLDQGLNWESIDLGFNGVAVGVLNNIDNSSPQFLVMTIATDGKSSKAQHFLYSVDFSDAYEKKICDVTKDELFEEWTGRIDPVTKLPICVNGHKEKFRRRKADAECFSGELFQDLTPIEEPCDCDPDIDYECSLGFEFDAESNRCEPNLSILSSHYCVGKNLKRKVKVDRKSKVAGTKCKKDVKLKDNSFTLDCSKTSEPDLSEQRIVSTTISFEGSPVQYIYLKQGTNTTLLDETVILRTSLRTVYVSHNGGTTFDRVSIEDDVSFIDIYTNHYFPDNVYLITDTDELYVSDNRAISFQKVDMPSRAGLELGVRALTFHKSDPNKFIWFGEKDCNSIFDRSCQTQAYITEDNGLSFKPLLENVRSCYFVGTTFDSKLYDFDPNLIFCEQRVPNQRFLKLVASKDYFYDDKEELYPKIIGIATTMSFVIVATINEDNRSLKAFITADGSTFAEQLFPADLDFGREVAYTVIDNWESKTPNFFFHLTTSEDKDLEFGALLKSNYNGTTYTLAANNVNRNDRGYVDYEIVLNLNGIALINTVINSKELESEQSLETAKKLKTQITYNDGSEWVYLKPPTIDSEKNKFSCVKDKLSLEKCSLNLKGATDRPDSRDSISSGSAVGLLFGVGNVGEYLNQDSSGLALYFSKDAGISWKEIAKGDYMWEFGDQGTILVIVEFKKKVDTLKYSLDEGETWFDYKFANEKTYVLDLATVPSDTSRKFIILANRGEEGDHETVVHTIDFSKVHQRQCLLNLQDSNAGDDFEYWSPKNPSAVDGCMLGHEESYLKRIASHSDCFIGNAPLSEKYKVIKNCACTRRDYECDYNFALANDGTCKLVEGESPLDYSEVCRRDPTSIEYFLPTGYRKVGLSTCEGGLELDNWNPVPCPGKTREFNRKYGTGATGYKIVVIVAVPLLVLLSATWFLYEKGIKRNGGFARFGVIRLGEDDDDDLQMIEENNTDKVVNVVVKGLIHAFRAVFVSYLFFRKRAAKMFGGSSFSHRHILPQDEDAQAFLASDLESESGELFRYASDDDDAREIDSVIEGGIDVEDDDEENINFDSR</sequence>
<keyword id="KW-0325">Glycoprotein</keyword>
<keyword id="KW-0333">Golgi apparatus</keyword>
<keyword id="KW-0472">Membrane</keyword>
<keyword id="KW-0653">Protein transport</keyword>
<keyword id="KW-0675">Receptor</keyword>
<keyword id="KW-1185">Reference proteome</keyword>
<keyword id="KW-0677">Repeat</keyword>
<keyword id="KW-0732">Signal</keyword>
<keyword id="KW-0812">Transmembrane</keyword>
<keyword id="KW-1133">Transmembrane helix</keyword>
<keyword id="KW-0813">Transport</keyword>
<evidence type="ECO:0000250" key="1"/>
<evidence type="ECO:0000255" key="2"/>
<evidence type="ECO:0000305" key="3"/>
<proteinExistence type="inferred from homology"/>
<accession>C4R192</accession>
<comment type="function">
    <text evidence="1">Functions as a sorting receptor in the Golgi compartment required for the intracellular sorting and delivery of soluble vacuolar proteins, like carboxypeptidase Y (CPY) and proteinase A. Executes multiple rounds of sorting by cycling between the late Golgi and a prevacuolar endosome-like compartment (By similarity).</text>
</comment>
<comment type="subcellular location">
    <subcellularLocation>
        <location evidence="1">Golgi apparatus</location>
        <location evidence="1">trans-Golgi network membrane</location>
        <topology evidence="1">Multi-pass membrane protein</topology>
    </subcellularLocation>
    <subcellularLocation>
        <location evidence="1">Prevacuolar compartment membrane</location>
        <topology evidence="1">Multi-pass membrane protein</topology>
    </subcellularLocation>
    <text evidence="1">Cycles between the Golgi apparatus and the prevacuolar compartment.</text>
</comment>
<comment type="similarity">
    <text evidence="3">Belongs to the VPS10-related sortilin family.</text>
</comment>
<name>VPS10_KOMPG</name>
<gene>
    <name type="primary">VPS10</name>
    <name type="ordered locus">PAS_chr2-1_0625</name>
</gene>
<dbReference type="EMBL" id="FN392320">
    <property type="protein sequence ID" value="CAY69266.1"/>
    <property type="molecule type" value="Genomic_DNA"/>
</dbReference>
<dbReference type="RefSeq" id="XP_002491546.1">
    <property type="nucleotide sequence ID" value="XM_002491501.1"/>
</dbReference>
<dbReference type="SMR" id="C4R192"/>
<dbReference type="FunCoup" id="C4R192">
    <property type="interactions" value="212"/>
</dbReference>
<dbReference type="STRING" id="644223.C4R192"/>
<dbReference type="GlyCosmos" id="C4R192">
    <property type="glycosylation" value="6 sites, No reported glycans"/>
</dbReference>
<dbReference type="EnsemblFungi" id="CAY69266">
    <property type="protein sequence ID" value="CAY69266"/>
    <property type="gene ID" value="PAS_chr2-1_0625"/>
</dbReference>
<dbReference type="GeneID" id="8198939"/>
<dbReference type="KEGG" id="ppa:PAS_chr2-1_0625"/>
<dbReference type="eggNOG" id="KOG3511">
    <property type="taxonomic scope" value="Eukaryota"/>
</dbReference>
<dbReference type="HOGENOM" id="CLU_000700_0_0_1"/>
<dbReference type="InParanoid" id="C4R192"/>
<dbReference type="OMA" id="WIANQID"/>
<dbReference type="OrthoDB" id="443634at2759"/>
<dbReference type="Proteomes" id="UP000000314">
    <property type="component" value="Chromosome 2"/>
</dbReference>
<dbReference type="GO" id="GO:0005829">
    <property type="term" value="C:cytosol"/>
    <property type="evidence" value="ECO:0007669"/>
    <property type="project" value="GOC"/>
</dbReference>
<dbReference type="GO" id="GO:0005794">
    <property type="term" value="C:Golgi apparatus"/>
    <property type="evidence" value="ECO:0007669"/>
    <property type="project" value="UniProtKB-SubCell"/>
</dbReference>
<dbReference type="GO" id="GO:0016020">
    <property type="term" value="C:membrane"/>
    <property type="evidence" value="ECO:0007669"/>
    <property type="project" value="UniProtKB-KW"/>
</dbReference>
<dbReference type="GO" id="GO:0006895">
    <property type="term" value="P:Golgi to endosome transport"/>
    <property type="evidence" value="ECO:0007669"/>
    <property type="project" value="TreeGrafter"/>
</dbReference>
<dbReference type="GO" id="GO:0006896">
    <property type="term" value="P:Golgi to vacuole transport"/>
    <property type="evidence" value="ECO:0007669"/>
    <property type="project" value="TreeGrafter"/>
</dbReference>
<dbReference type="GO" id="GO:0006623">
    <property type="term" value="P:protein targeting to vacuole"/>
    <property type="evidence" value="ECO:0007669"/>
    <property type="project" value="TreeGrafter"/>
</dbReference>
<dbReference type="FunFam" id="3.30.60.270:FF:000005">
    <property type="entry name" value="Sortilin"/>
    <property type="match status" value="1"/>
</dbReference>
<dbReference type="Gene3D" id="2.10.70.80">
    <property type="match status" value="2"/>
</dbReference>
<dbReference type="Gene3D" id="3.30.60.270">
    <property type="match status" value="1"/>
</dbReference>
<dbReference type="Gene3D" id="2.130.10.10">
    <property type="entry name" value="YVTN repeat-like/Quinoprotein amine dehydrogenase"/>
    <property type="match status" value="1"/>
</dbReference>
<dbReference type="InterPro" id="IPR036278">
    <property type="entry name" value="Sialidase_sf"/>
</dbReference>
<dbReference type="InterPro" id="IPR031777">
    <property type="entry name" value="Sortilin_C"/>
</dbReference>
<dbReference type="InterPro" id="IPR031778">
    <property type="entry name" value="Sortilin_N"/>
</dbReference>
<dbReference type="InterPro" id="IPR006581">
    <property type="entry name" value="VPS10"/>
</dbReference>
<dbReference type="InterPro" id="IPR050310">
    <property type="entry name" value="VPS10-sortilin"/>
</dbReference>
<dbReference type="InterPro" id="IPR015943">
    <property type="entry name" value="WD40/YVTN_repeat-like_dom_sf"/>
</dbReference>
<dbReference type="PANTHER" id="PTHR12106">
    <property type="entry name" value="SORTILIN RELATED"/>
    <property type="match status" value="1"/>
</dbReference>
<dbReference type="PANTHER" id="PTHR12106:SF27">
    <property type="entry name" value="SORTILIN-RELATED RECEPTOR"/>
    <property type="match status" value="1"/>
</dbReference>
<dbReference type="Pfam" id="PF15902">
    <property type="entry name" value="Sortilin-Vps10"/>
    <property type="match status" value="2"/>
</dbReference>
<dbReference type="Pfam" id="PF15901">
    <property type="entry name" value="Sortilin_C"/>
    <property type="match status" value="2"/>
</dbReference>
<dbReference type="SMART" id="SM00602">
    <property type="entry name" value="VPS10"/>
    <property type="match status" value="2"/>
</dbReference>
<dbReference type="SUPFAM" id="SSF110296">
    <property type="entry name" value="Oligoxyloglucan reducing end-specific cellobiohydrolase"/>
    <property type="match status" value="1"/>
</dbReference>
<dbReference type="SUPFAM" id="SSF50939">
    <property type="entry name" value="Sialidases"/>
    <property type="match status" value="1"/>
</dbReference>
<protein>
    <recommendedName>
        <fullName>Vacuolar protein sorting/targeting protein 10</fullName>
    </recommendedName>
    <alternativeName>
        <fullName>Carboxypeptidase Y receptor</fullName>
        <shortName>CPY receptor</shortName>
    </alternativeName>
    <alternativeName>
        <fullName>Sortilin VPS10</fullName>
    </alternativeName>
    <alternativeName>
        <fullName>Vacuolar carboxypeptidase sorting receptor VPS10</fullName>
    </alternativeName>
</protein>